<gene>
    <name evidence="1" type="primary">rpmD</name>
    <name type="ordered locus">SPP_0278</name>
</gene>
<feature type="chain" id="PRO_1000184165" description="Large ribosomal subunit protein uL30">
    <location>
        <begin position="1"/>
        <end position="60"/>
    </location>
</feature>
<proteinExistence type="inferred from homology"/>
<protein>
    <recommendedName>
        <fullName evidence="1">Large ribosomal subunit protein uL30</fullName>
    </recommendedName>
    <alternativeName>
        <fullName evidence="2">50S ribosomal protein L30</fullName>
    </alternativeName>
</protein>
<keyword id="KW-0687">Ribonucleoprotein</keyword>
<keyword id="KW-0689">Ribosomal protein</keyword>
<sequence>MAQIKITLTKSPIGRIPSQRKTVVALGLGKLNSSVIKEDNAAIRGMITAVSHLVTVEEVN</sequence>
<name>RL30_STRZP</name>
<dbReference type="EMBL" id="CP000920">
    <property type="protein sequence ID" value="ACO20485.1"/>
    <property type="molecule type" value="Genomic_DNA"/>
</dbReference>
<dbReference type="RefSeq" id="WP_000057241.1">
    <property type="nucleotide sequence ID" value="NC_012467.1"/>
</dbReference>
<dbReference type="SMR" id="C1CIB5"/>
<dbReference type="GeneID" id="93738975"/>
<dbReference type="KEGG" id="spp:SPP_0278"/>
<dbReference type="HOGENOM" id="CLU_131047_2_1_9"/>
<dbReference type="GO" id="GO:0022625">
    <property type="term" value="C:cytosolic large ribosomal subunit"/>
    <property type="evidence" value="ECO:0007669"/>
    <property type="project" value="TreeGrafter"/>
</dbReference>
<dbReference type="GO" id="GO:0003735">
    <property type="term" value="F:structural constituent of ribosome"/>
    <property type="evidence" value="ECO:0007669"/>
    <property type="project" value="InterPro"/>
</dbReference>
<dbReference type="GO" id="GO:0006412">
    <property type="term" value="P:translation"/>
    <property type="evidence" value="ECO:0007669"/>
    <property type="project" value="UniProtKB-UniRule"/>
</dbReference>
<dbReference type="CDD" id="cd01658">
    <property type="entry name" value="Ribosomal_L30"/>
    <property type="match status" value="1"/>
</dbReference>
<dbReference type="FunFam" id="3.30.1390.20:FF:000001">
    <property type="entry name" value="50S ribosomal protein L30"/>
    <property type="match status" value="1"/>
</dbReference>
<dbReference type="Gene3D" id="3.30.1390.20">
    <property type="entry name" value="Ribosomal protein L30, ferredoxin-like fold domain"/>
    <property type="match status" value="1"/>
</dbReference>
<dbReference type="HAMAP" id="MF_01371_B">
    <property type="entry name" value="Ribosomal_uL30_B"/>
    <property type="match status" value="1"/>
</dbReference>
<dbReference type="InterPro" id="IPR036919">
    <property type="entry name" value="Ribo_uL30_ferredoxin-like_sf"/>
</dbReference>
<dbReference type="InterPro" id="IPR005996">
    <property type="entry name" value="Ribosomal_uL30_bac-type"/>
</dbReference>
<dbReference type="InterPro" id="IPR018038">
    <property type="entry name" value="Ribosomal_uL30_CS"/>
</dbReference>
<dbReference type="InterPro" id="IPR016082">
    <property type="entry name" value="Ribosomal_uL30_ferredoxin-like"/>
</dbReference>
<dbReference type="NCBIfam" id="TIGR01308">
    <property type="entry name" value="rpmD_bact"/>
    <property type="match status" value="1"/>
</dbReference>
<dbReference type="PANTHER" id="PTHR15892:SF2">
    <property type="entry name" value="LARGE RIBOSOMAL SUBUNIT PROTEIN UL30M"/>
    <property type="match status" value="1"/>
</dbReference>
<dbReference type="PANTHER" id="PTHR15892">
    <property type="entry name" value="MITOCHONDRIAL RIBOSOMAL PROTEIN L30"/>
    <property type="match status" value="1"/>
</dbReference>
<dbReference type="Pfam" id="PF00327">
    <property type="entry name" value="Ribosomal_L30"/>
    <property type="match status" value="1"/>
</dbReference>
<dbReference type="PIRSF" id="PIRSF002211">
    <property type="entry name" value="Ribosomal_L30_bac-type"/>
    <property type="match status" value="1"/>
</dbReference>
<dbReference type="SUPFAM" id="SSF55129">
    <property type="entry name" value="Ribosomal protein L30p/L7e"/>
    <property type="match status" value="1"/>
</dbReference>
<dbReference type="PROSITE" id="PS00634">
    <property type="entry name" value="RIBOSOMAL_L30"/>
    <property type="match status" value="1"/>
</dbReference>
<reference key="1">
    <citation type="journal article" date="2010" name="Genome Biol.">
        <title>Structure and dynamics of the pan-genome of Streptococcus pneumoniae and closely related species.</title>
        <authorList>
            <person name="Donati C."/>
            <person name="Hiller N.L."/>
            <person name="Tettelin H."/>
            <person name="Muzzi A."/>
            <person name="Croucher N.J."/>
            <person name="Angiuoli S.V."/>
            <person name="Oggioni M."/>
            <person name="Dunning Hotopp J.C."/>
            <person name="Hu F.Z."/>
            <person name="Riley D.R."/>
            <person name="Covacci A."/>
            <person name="Mitchell T.J."/>
            <person name="Bentley S.D."/>
            <person name="Kilian M."/>
            <person name="Ehrlich G.D."/>
            <person name="Rappuoli R."/>
            <person name="Moxon E.R."/>
            <person name="Masignani V."/>
        </authorList>
    </citation>
    <scope>NUCLEOTIDE SEQUENCE [LARGE SCALE GENOMIC DNA]</scope>
    <source>
        <strain>P1031</strain>
    </source>
</reference>
<accession>C1CIB5</accession>
<comment type="subunit">
    <text evidence="1">Part of the 50S ribosomal subunit.</text>
</comment>
<comment type="similarity">
    <text evidence="1">Belongs to the universal ribosomal protein uL30 family.</text>
</comment>
<organism>
    <name type="scientific">Streptococcus pneumoniae (strain P1031)</name>
    <dbReference type="NCBI Taxonomy" id="488223"/>
    <lineage>
        <taxon>Bacteria</taxon>
        <taxon>Bacillati</taxon>
        <taxon>Bacillota</taxon>
        <taxon>Bacilli</taxon>
        <taxon>Lactobacillales</taxon>
        <taxon>Streptococcaceae</taxon>
        <taxon>Streptococcus</taxon>
    </lineage>
</organism>
<evidence type="ECO:0000255" key="1">
    <source>
        <dbReference type="HAMAP-Rule" id="MF_01371"/>
    </source>
</evidence>
<evidence type="ECO:0000305" key="2"/>